<keyword id="KW-0050">Antiport</keyword>
<keyword id="KW-0997">Cell inner membrane</keyword>
<keyword id="KW-1003">Cell membrane</keyword>
<keyword id="KW-0406">Ion transport</keyword>
<keyword id="KW-0472">Membrane</keyword>
<keyword id="KW-0630">Potassium</keyword>
<keyword id="KW-0633">Potassium transport</keyword>
<keyword id="KW-0812">Transmembrane</keyword>
<keyword id="KW-1133">Transmembrane helix</keyword>
<keyword id="KW-0813">Transport</keyword>
<organism>
    <name type="scientific">Escherichia coli (strain UTI89 / UPEC)</name>
    <dbReference type="NCBI Taxonomy" id="364106"/>
    <lineage>
        <taxon>Bacteria</taxon>
        <taxon>Pseudomonadati</taxon>
        <taxon>Pseudomonadota</taxon>
        <taxon>Gammaproteobacteria</taxon>
        <taxon>Enterobacterales</taxon>
        <taxon>Enterobacteriaceae</taxon>
        <taxon>Escherichia</taxon>
    </lineage>
</organism>
<protein>
    <recommendedName>
        <fullName evidence="1">Glutathione-regulated potassium-efflux system protein KefC</fullName>
    </recommendedName>
    <alternativeName>
        <fullName evidence="1">K(+)/H(+) antiporter</fullName>
    </alternativeName>
</protein>
<comment type="function">
    <text evidence="1">Pore-forming subunit of a potassium efflux system that confers protection against electrophiles. Catalyzes K(+)/H(+) antiport.</text>
</comment>
<comment type="subunit">
    <text evidence="1">Homodimer. Interacts with the regulatory subunit KefF.</text>
</comment>
<comment type="subcellular location">
    <subcellularLocation>
        <location evidence="1">Cell inner membrane</location>
        <topology evidence="1">Multi-pass membrane protein</topology>
    </subcellularLocation>
</comment>
<comment type="similarity">
    <text evidence="1">Belongs to the monovalent cation:proton antiporter 2 (CPA2) transporter (TC 2.A.37) family. KefC subfamily.</text>
</comment>
<gene>
    <name evidence="1" type="primary">kefC</name>
    <name type="ordered locus">UTI89_C0053</name>
</gene>
<dbReference type="EMBL" id="CP000243">
    <property type="protein sequence ID" value="ABE05563.1"/>
    <property type="molecule type" value="Genomic_DNA"/>
</dbReference>
<dbReference type="RefSeq" id="WP_000377122.1">
    <property type="nucleotide sequence ID" value="NZ_CP064825.1"/>
</dbReference>
<dbReference type="SMR" id="Q1RGF1"/>
<dbReference type="KEGG" id="eci:UTI89_C0053"/>
<dbReference type="HOGENOM" id="CLU_005126_9_3_6"/>
<dbReference type="Proteomes" id="UP000001952">
    <property type="component" value="Chromosome"/>
</dbReference>
<dbReference type="GO" id="GO:0005886">
    <property type="term" value="C:plasma membrane"/>
    <property type="evidence" value="ECO:0007669"/>
    <property type="project" value="UniProtKB-SubCell"/>
</dbReference>
<dbReference type="GO" id="GO:0019899">
    <property type="term" value="F:enzyme binding"/>
    <property type="evidence" value="ECO:0007669"/>
    <property type="project" value="InterPro"/>
</dbReference>
<dbReference type="GO" id="GO:0015503">
    <property type="term" value="F:glutathione-regulated potassium exporter activity"/>
    <property type="evidence" value="ECO:0007669"/>
    <property type="project" value="UniProtKB-UniRule"/>
</dbReference>
<dbReference type="GO" id="GO:0015643">
    <property type="term" value="F:toxic substance binding"/>
    <property type="evidence" value="ECO:0007669"/>
    <property type="project" value="InterPro"/>
</dbReference>
<dbReference type="GO" id="GO:1902600">
    <property type="term" value="P:proton transmembrane transport"/>
    <property type="evidence" value="ECO:0007669"/>
    <property type="project" value="InterPro"/>
</dbReference>
<dbReference type="GO" id="GO:0051595">
    <property type="term" value="P:response to methylglyoxal"/>
    <property type="evidence" value="ECO:0007669"/>
    <property type="project" value="InterPro"/>
</dbReference>
<dbReference type="FunFam" id="1.20.1530.20:FF:000001">
    <property type="entry name" value="Glutathione-regulated potassium-efflux system protein KefB"/>
    <property type="match status" value="1"/>
</dbReference>
<dbReference type="FunFam" id="3.40.50.720:FF:000036">
    <property type="entry name" value="Glutathione-regulated potassium-efflux system protein KefB"/>
    <property type="match status" value="1"/>
</dbReference>
<dbReference type="Gene3D" id="1.20.1530.20">
    <property type="match status" value="1"/>
</dbReference>
<dbReference type="Gene3D" id="3.40.50.720">
    <property type="entry name" value="NAD(P)-binding Rossmann-like Domain"/>
    <property type="match status" value="1"/>
</dbReference>
<dbReference type="HAMAP" id="MF_01413">
    <property type="entry name" value="K_H_efflux_KefC"/>
    <property type="match status" value="1"/>
</dbReference>
<dbReference type="InterPro" id="IPR006153">
    <property type="entry name" value="Cation/H_exchanger_TM"/>
</dbReference>
<dbReference type="InterPro" id="IPR004771">
    <property type="entry name" value="K/H_exchanger"/>
</dbReference>
<dbReference type="InterPro" id="IPR023941">
    <property type="entry name" value="K_H_efflux_KefC"/>
</dbReference>
<dbReference type="InterPro" id="IPR006036">
    <property type="entry name" value="K_uptake_TrkA"/>
</dbReference>
<dbReference type="InterPro" id="IPR038770">
    <property type="entry name" value="Na+/solute_symporter_sf"/>
</dbReference>
<dbReference type="InterPro" id="IPR036291">
    <property type="entry name" value="NAD(P)-bd_dom_sf"/>
</dbReference>
<dbReference type="InterPro" id="IPR003148">
    <property type="entry name" value="RCK_N"/>
</dbReference>
<dbReference type="NCBIfam" id="TIGR00932">
    <property type="entry name" value="2a37"/>
    <property type="match status" value="1"/>
</dbReference>
<dbReference type="NCBIfam" id="NF002924">
    <property type="entry name" value="PRK03562.1"/>
    <property type="match status" value="1"/>
</dbReference>
<dbReference type="PANTHER" id="PTHR46157:SF3">
    <property type="entry name" value="GLUTATHIONE-REGULATED POTASSIUM-EFFLUX SYSTEM PROTEIN KEFC"/>
    <property type="match status" value="1"/>
</dbReference>
<dbReference type="PANTHER" id="PTHR46157">
    <property type="entry name" value="K(+) EFFLUX ANTIPORTER 3, CHLOROPLASTIC"/>
    <property type="match status" value="1"/>
</dbReference>
<dbReference type="Pfam" id="PF00999">
    <property type="entry name" value="Na_H_Exchanger"/>
    <property type="match status" value="1"/>
</dbReference>
<dbReference type="Pfam" id="PF02254">
    <property type="entry name" value="TrkA_N"/>
    <property type="match status" value="1"/>
</dbReference>
<dbReference type="PRINTS" id="PR00335">
    <property type="entry name" value="KUPTAKETRKA"/>
</dbReference>
<dbReference type="SUPFAM" id="SSF51735">
    <property type="entry name" value="NAD(P)-binding Rossmann-fold domains"/>
    <property type="match status" value="1"/>
</dbReference>
<dbReference type="PROSITE" id="PS51201">
    <property type="entry name" value="RCK_N"/>
    <property type="match status" value="1"/>
</dbReference>
<reference key="1">
    <citation type="journal article" date="2006" name="Proc. Natl. Acad. Sci. U.S.A.">
        <title>Identification of genes subject to positive selection in uropathogenic strains of Escherichia coli: a comparative genomics approach.</title>
        <authorList>
            <person name="Chen S.L."/>
            <person name="Hung C.-S."/>
            <person name="Xu J."/>
            <person name="Reigstad C.S."/>
            <person name="Magrini V."/>
            <person name="Sabo A."/>
            <person name="Blasiar D."/>
            <person name="Bieri T."/>
            <person name="Meyer R.R."/>
            <person name="Ozersky P."/>
            <person name="Armstrong J.R."/>
            <person name="Fulton R.S."/>
            <person name="Latreille J.P."/>
            <person name="Spieth J."/>
            <person name="Hooton T.M."/>
            <person name="Mardis E.R."/>
            <person name="Hultgren S.J."/>
            <person name="Gordon J.I."/>
        </authorList>
    </citation>
    <scope>NUCLEOTIDE SEQUENCE [LARGE SCALE GENOMIC DNA]</scope>
    <source>
        <strain>UTI89 / UPEC</strain>
    </source>
</reference>
<sequence length="620" mass="67720">MDSHTLIQALIYLGSAALIVPIAVRLGLGSVLGYLIAGCIIGPWGLRLVTDAESILHFAEIGVVLMLFIIGLELDPQRLWKLRAAVFGGGALQMVICGGLLGLFCMLLGLRWQVAELIGMTLALSSTAIAMQAMNERNLMVTQMGRSAFAVLLFQDIAAIPLVAMIPLLAASSASTTMGAFVLSALKVAGALALVVLLGRYVTRPALRFVARSGLREVFSAVALFLVFGFGLLLEEVGLSMAMGAFLAGVLLASSEYRHALESDIEPFKGLLLGLFFIGVGMSIDFGTLIENPLRIVILLLGFLIIKIAMLWLIARPLQVPNKQRRWFAVLLGQGSEFAFVVFGAAQMANVLEPEWAKSLTLAVALSMAATPILLVILNRLEQSSTEEAREADEIDEEQPRVIIAGFGRFGQITGRLLLSSGVKMVVLDHDPDHIETLRKFGMKVFYGDATRMDLLESAGAAKAEVLINAIDDPQTNLQLTEMVKEHFPHLQIIARARDVDHYIRLRQAGVEKPERETFEGALKTGRLALESLGLGPYEARERADVFRRFNIQMVEEMAMVENDTKARAAVYKRTSAMLSEIITEDREHLSLIQRHGWQGTEEGKHTGNMADEPETKPSS</sequence>
<proteinExistence type="inferred from homology"/>
<name>KEFC_ECOUT</name>
<accession>Q1RGF1</accession>
<evidence type="ECO:0000255" key="1">
    <source>
        <dbReference type="HAMAP-Rule" id="MF_01413"/>
    </source>
</evidence>
<evidence type="ECO:0000255" key="2">
    <source>
        <dbReference type="PROSITE-ProRule" id="PRU00543"/>
    </source>
</evidence>
<evidence type="ECO:0000256" key="3">
    <source>
        <dbReference type="SAM" id="MobiDB-lite"/>
    </source>
</evidence>
<feature type="chain" id="PRO_1000087393" description="Glutathione-regulated potassium-efflux system protein KefC">
    <location>
        <begin position="1"/>
        <end position="620"/>
    </location>
</feature>
<feature type="transmembrane region" description="Helical" evidence="1">
    <location>
        <begin position="4"/>
        <end position="24"/>
    </location>
</feature>
<feature type="transmembrane region" description="Helical" evidence="1">
    <location>
        <begin position="26"/>
        <end position="46"/>
    </location>
</feature>
<feature type="transmembrane region" description="Helical" evidence="1">
    <location>
        <begin position="54"/>
        <end position="74"/>
    </location>
</feature>
<feature type="transmembrane region" description="Helical" evidence="1">
    <location>
        <begin position="90"/>
        <end position="110"/>
    </location>
</feature>
<feature type="transmembrane region" description="Helical" evidence="1">
    <location>
        <begin position="114"/>
        <end position="134"/>
    </location>
</feature>
<feature type="transmembrane region" description="Helical" evidence="1">
    <location>
        <begin position="149"/>
        <end position="169"/>
    </location>
</feature>
<feature type="transmembrane region" description="Helical" evidence="1">
    <location>
        <begin position="178"/>
        <end position="198"/>
    </location>
</feature>
<feature type="transmembrane region" description="Helical" evidence="1">
    <location>
        <begin position="218"/>
        <end position="238"/>
    </location>
</feature>
<feature type="transmembrane region" description="Helical" evidence="1">
    <location>
        <begin position="270"/>
        <end position="290"/>
    </location>
</feature>
<feature type="transmembrane region" description="Helical" evidence="1">
    <location>
        <begin position="294"/>
        <end position="314"/>
    </location>
</feature>
<feature type="transmembrane region" description="Helical" evidence="1">
    <location>
        <begin position="327"/>
        <end position="347"/>
    </location>
</feature>
<feature type="transmembrane region" description="Helical" evidence="1">
    <location>
        <begin position="359"/>
        <end position="379"/>
    </location>
</feature>
<feature type="domain" description="RCK N-terminal" evidence="2">
    <location>
        <begin position="399"/>
        <end position="518"/>
    </location>
</feature>
<feature type="region of interest" description="Disordered" evidence="3">
    <location>
        <begin position="597"/>
        <end position="620"/>
    </location>
</feature>